<proteinExistence type="evidence at transcript level"/>
<gene>
    <name type="primary">amt1</name>
    <name type="ORF">SERLADRAFT_356993</name>
</gene>
<name>AMT1_SERL9</name>
<comment type="function">
    <text evidence="1 5">An L-tyrosine:2-oxoglutarate aminotransferase (probably amt1) and atromentin synthetase nps3 catalyze consecutive steps to turn over L-tyrosine into atromentin, which represents the generic precursor molecule for the entire terphenylquinone and pulvinic acid family of pigments, which are widely distributed secondary metabolites in homobasidiomycetes (Probable). The first step catalyzed by amt1 converts L-tyrosine in to 4-hydroxyphenylpyruvate (4-HPP). Adenylation of two 4-HPP monomers by the nps3 adenylation (A) domain, covalent tethering of the monomers as a thioester and oxoester onto the nps3 thiolation (T) and thioesterase (TE) domains, respectively, and symmetric C-C-bond formation between two monomers catalyzed by the nps3 TE domain leads to atromentin. Follow-up products of atromentin in S.lacrymans include atromentic acid, xerocomic acid, isoxerocomic acid and variegatic acid (By similarity).</text>
</comment>
<comment type="catalytic activity">
    <reaction evidence="1">
        <text>L-tyrosine + 2-oxoglutarate = 3-(4-hydroxyphenyl)pyruvate + L-glutamate</text>
        <dbReference type="Rhea" id="RHEA:15093"/>
        <dbReference type="ChEBI" id="CHEBI:16810"/>
        <dbReference type="ChEBI" id="CHEBI:29985"/>
        <dbReference type="ChEBI" id="CHEBI:36242"/>
        <dbReference type="ChEBI" id="CHEBI:58315"/>
        <dbReference type="EC" id="2.6.1.5"/>
    </reaction>
</comment>
<comment type="cofactor">
    <cofactor evidence="2">
        <name>pyridoxal 5'-phosphate</name>
        <dbReference type="ChEBI" id="CHEBI:597326"/>
    </cofactor>
</comment>
<comment type="pathway">
    <text evidence="1">Secondary metabolite biosynthesis.</text>
</comment>
<comment type="alternative products">
    <event type="alternative splicing"/>
    <isoform>
        <id>F8P1W6-1</id>
        <name>1</name>
        <sequence type="displayed"/>
    </isoform>
    <isoform>
        <id>F8P1W6-2</id>
        <name>2</name>
        <sequence type="described" ref="VSP_059261"/>
    </isoform>
</comment>
<comment type="induction">
    <text evidence="3">Up-regulated upon coincubation of the fungus with the terrestrial bacteria Streptomyces iranensis, Bacillus subtilis or Pseudomonas putida.</text>
</comment>
<comment type="similarity">
    <text evidence="4">Belongs to the class-I pyridoxal-phosphate-dependent aminotransferase family.</text>
</comment>
<protein>
    <recommendedName>
        <fullName>L-tyrosine:2-oxoglutarate aminotransferase amt1</fullName>
        <ecNumber evidence="1">2.6.1.5</ecNumber>
    </recommendedName>
    <alternativeName>
        <fullName>Atromentin biosynthesis protein amt1</fullName>
    </alternativeName>
</protein>
<organism>
    <name type="scientific">Serpula lacrymans var. lacrymans (strain S7.9)</name>
    <name type="common">Dry rot fungus</name>
    <dbReference type="NCBI Taxonomy" id="578457"/>
    <lineage>
        <taxon>Eukaryota</taxon>
        <taxon>Fungi</taxon>
        <taxon>Dikarya</taxon>
        <taxon>Basidiomycota</taxon>
        <taxon>Agaricomycotina</taxon>
        <taxon>Agaricomycetes</taxon>
        <taxon>Agaricomycetidae</taxon>
        <taxon>Boletales</taxon>
        <taxon>Coniophorineae</taxon>
        <taxon>Serpulaceae</taxon>
        <taxon>Serpula</taxon>
    </lineage>
</organism>
<dbReference type="EC" id="2.6.1.5" evidence="1"/>
<dbReference type="EMBL" id="GL945436">
    <property type="protein sequence ID" value="EGO23144.1"/>
    <property type="molecule type" value="Genomic_DNA"/>
</dbReference>
<dbReference type="EMBL" id="GL945436">
    <property type="protein sequence ID" value="EGO23143.1"/>
    <property type="molecule type" value="Genomic_DNA"/>
</dbReference>
<dbReference type="RefSeq" id="XP_007320383.1">
    <molecule id="F8P1W6-2"/>
    <property type="nucleotide sequence ID" value="XM_007320321.1"/>
</dbReference>
<dbReference type="RefSeq" id="XP_007320384.1">
    <molecule id="F8P1W6-1"/>
    <property type="nucleotide sequence ID" value="XM_007320322.1"/>
</dbReference>
<dbReference type="SMR" id="F8P1W6"/>
<dbReference type="GeneID" id="18809549"/>
<dbReference type="KEGG" id="sla:SERLADRAFT_356993"/>
<dbReference type="OrthoDB" id="691673at2759"/>
<dbReference type="Proteomes" id="UP000008064">
    <property type="component" value="Unassembled WGS sequence"/>
</dbReference>
<dbReference type="GO" id="GO:0004838">
    <property type="term" value="F:L-tyrosine-2-oxoglutarate transaminase activity"/>
    <property type="evidence" value="ECO:0007669"/>
    <property type="project" value="RHEA"/>
</dbReference>
<dbReference type="GO" id="GO:0030170">
    <property type="term" value="F:pyridoxal phosphate binding"/>
    <property type="evidence" value="ECO:0007669"/>
    <property type="project" value="InterPro"/>
</dbReference>
<dbReference type="GO" id="GO:1901605">
    <property type="term" value="P:alpha-amino acid metabolic process"/>
    <property type="evidence" value="ECO:0007669"/>
    <property type="project" value="TreeGrafter"/>
</dbReference>
<dbReference type="GO" id="GO:0009058">
    <property type="term" value="P:biosynthetic process"/>
    <property type="evidence" value="ECO:0007669"/>
    <property type="project" value="InterPro"/>
</dbReference>
<dbReference type="CDD" id="cd00609">
    <property type="entry name" value="AAT_like"/>
    <property type="match status" value="1"/>
</dbReference>
<dbReference type="Gene3D" id="3.40.640.10">
    <property type="entry name" value="Type I PLP-dependent aspartate aminotransferase-like (Major domain)"/>
    <property type="match status" value="1"/>
</dbReference>
<dbReference type="InterPro" id="IPR004839">
    <property type="entry name" value="Aminotransferase_I/II_large"/>
</dbReference>
<dbReference type="InterPro" id="IPR050859">
    <property type="entry name" value="Class-I_PLP-dep_aminotransf"/>
</dbReference>
<dbReference type="InterPro" id="IPR015424">
    <property type="entry name" value="PyrdxlP-dep_Trfase"/>
</dbReference>
<dbReference type="InterPro" id="IPR015421">
    <property type="entry name" value="PyrdxlP-dep_Trfase_major"/>
</dbReference>
<dbReference type="PANTHER" id="PTHR42790">
    <property type="entry name" value="AMINOTRANSFERASE"/>
    <property type="match status" value="1"/>
</dbReference>
<dbReference type="PANTHER" id="PTHR42790:SF19">
    <property type="entry name" value="KYNURENINE_ALPHA-AMINOADIPATE AMINOTRANSFERASE, MITOCHONDRIAL"/>
    <property type="match status" value="1"/>
</dbReference>
<dbReference type="Pfam" id="PF00155">
    <property type="entry name" value="Aminotran_1_2"/>
    <property type="match status" value="1"/>
</dbReference>
<dbReference type="SUPFAM" id="SSF53383">
    <property type="entry name" value="PLP-dependent transferases"/>
    <property type="match status" value="1"/>
</dbReference>
<sequence length="520" mass="58111">MVYFATSAENSKTSYKVDLSHHLSRETRARQPNPIKTIWKIAQTKVGTINMGNGDPHNTLYPISKIDFVVPSLDQPNPVQAWKEGNSKTDIISSYKDESCALSLKTAFAYGTGAGLQQVRGVLADLNNRIHSPPNHTVSLSLGNADSLTKCFRLFGDPGDSFLCEEFTFSPMTNAALPLGIKWEPIKMDKGGLIPADMDKILTNWDERTQGRRPHVLYTVPCSQNPTGSTLPFERRKSIYEIARKWDIIILEDDPYYFLQYGLNVDQFIVEQHGFTRALASVLPRSFLSMDYDGRVVRLDSFSKIVAPGMRLGWVTANNFFAEKLDSLTDSSSQHPHGFGQAFIAELLGDGGWGLDGFMKWTKSLCDEYQRRRDLFMDVFRREVGINGFATAEVPKSGMFVWIKINLEHHARYRVVKESNGDPRTNTAALMDELFRTLLDSGLVLIPASTFAITGSLSPPSGDCILDVSICIDGVGAIAELPLSIFQRVNYFRATFVGTDETICDGLKIFGRTIEQFFCF</sequence>
<accession>F8P1W6</accession>
<accession>F8P1W5</accession>
<reference key="1">
    <citation type="journal article" date="2011" name="Science">
        <title>The plant cell wall-decomposing machinery underlies the functional diversity of forest fungi.</title>
        <authorList>
            <person name="Eastwood D.C."/>
            <person name="Floudas D."/>
            <person name="Binder M."/>
            <person name="Majcherczyk A."/>
            <person name="Schneider P."/>
            <person name="Aerts A."/>
            <person name="Asiegbu F.O."/>
            <person name="Baker S.E."/>
            <person name="Barry K."/>
            <person name="Bendiksby M."/>
            <person name="Blumentritt M."/>
            <person name="Coutinho P.M."/>
            <person name="Cullen D."/>
            <person name="de Vries R.P."/>
            <person name="Gathman A."/>
            <person name="Goodell B."/>
            <person name="Henrissat B."/>
            <person name="Ihrmark K."/>
            <person name="Kauserud H."/>
            <person name="Kohler A."/>
            <person name="LaButti K."/>
            <person name="Lapidus A."/>
            <person name="Lavin J.L."/>
            <person name="Lee Y.-H."/>
            <person name="Lindquist E."/>
            <person name="Lilly W."/>
            <person name="Lucas S."/>
            <person name="Morin E."/>
            <person name="Murat C."/>
            <person name="Oguiza J.A."/>
            <person name="Park J."/>
            <person name="Pisabarro A.G."/>
            <person name="Riley R."/>
            <person name="Rosling A."/>
            <person name="Salamov A."/>
            <person name="Schmidt O."/>
            <person name="Schmutz J."/>
            <person name="Skrede I."/>
            <person name="Stenlid J."/>
            <person name="Wiebenga A."/>
            <person name="Xie X."/>
            <person name="Kuees U."/>
            <person name="Hibbett D.S."/>
            <person name="Hoffmeister D."/>
            <person name="Hoegberg N."/>
            <person name="Martin F."/>
            <person name="Grigoriev I.V."/>
            <person name="Watkinson S.C."/>
        </authorList>
    </citation>
    <scope>NUCLEOTIDE SEQUENCE [LARGE SCALE GENOMIC DNA]</scope>
    <source>
        <strain>S7.9</strain>
    </source>
</reference>
<reference key="2">
    <citation type="journal article" date="2016" name="Environ. Microbiol.">
        <title>Bacteria induce pigment formation in the basidiomycete Serpula lacrymans.</title>
        <authorList>
            <person name="Tauber J.P."/>
            <person name="Schroeckh V."/>
            <person name="Shelest E."/>
            <person name="Brakhage A.A."/>
            <person name="Hoffmeister D."/>
        </authorList>
    </citation>
    <scope>INDUCTION</scope>
</reference>
<feature type="chain" id="PRO_0000442628" description="L-tyrosine:2-oxoglutarate aminotransferase amt1">
    <location>
        <begin position="1"/>
        <end position="520"/>
    </location>
</feature>
<feature type="splice variant" id="VSP_059261" description="In isoform 2.">
    <location>
        <begin position="468"/>
        <end position="487"/>
    </location>
</feature>
<keyword id="KW-0025">Alternative splicing</keyword>
<keyword id="KW-0032">Aminotransferase</keyword>
<keyword id="KW-0663">Pyridoxal phosphate</keyword>
<keyword id="KW-0808">Transferase</keyword>
<evidence type="ECO:0000250" key="1">
    <source>
        <dbReference type="UniProtKB" id="B7STY2"/>
    </source>
</evidence>
<evidence type="ECO:0000250" key="2">
    <source>
        <dbReference type="UniProtKB" id="P00509"/>
    </source>
</evidence>
<evidence type="ECO:0000269" key="3">
    <source>
    </source>
</evidence>
<evidence type="ECO:0000305" key="4"/>
<evidence type="ECO:0000305" key="5">
    <source>
    </source>
</evidence>